<comment type="function">
    <text evidence="1">F(1)F(0) ATP synthase produces ATP from ADP in the presence of a proton or sodium gradient. F-type ATPases consist of two structural domains, F(1) containing the extramembraneous catalytic core and F(0) containing the membrane proton channel, linked together by a central stalk and a peripheral stalk. During catalysis, ATP synthesis in the catalytic domain of F(1) is coupled via a rotary mechanism of the central stalk subunits to proton translocation.</text>
</comment>
<comment type="function">
    <text evidence="1">This protein is part of the stalk that links CF(0) to CF(1). It either transmits conformational changes from CF(0) to CF(1) or is implicated in proton conduction.</text>
</comment>
<comment type="subunit">
    <text evidence="1">F-type ATPases have 2 components, F(1) - the catalytic core - and F(0) - the membrane proton channel. F(1) has five subunits: alpha(3), beta(3), gamma(1), delta(1), epsilon(1). CF(0) has four main subunits: a(1), b(1), b'(1) and c(10-14). The alpha and beta chains form an alternating ring which encloses part of the gamma chain. F(1) is attached to F(0) by a central stalk formed by the gamma and epsilon chains, while a peripheral stalk is formed by the delta, b and b' chains.</text>
</comment>
<comment type="subcellular location">
    <subcellularLocation>
        <location evidence="1">Cellular thylakoid membrane</location>
        <topology evidence="1">Peripheral membrane protein</topology>
    </subcellularLocation>
</comment>
<comment type="similarity">
    <text evidence="1">Belongs to the ATPase delta chain family.</text>
</comment>
<feature type="chain" id="PRO_1000184820" description="ATP synthase subunit delta">
    <location>
        <begin position="1"/>
        <end position="185"/>
    </location>
</feature>
<name>ATPD_PICP2</name>
<reference key="1">
    <citation type="submission" date="2008-02" db="EMBL/GenBank/DDBJ databases">
        <title>Complete sequence of Synechococcus sp. PCC 7002.</title>
        <authorList>
            <person name="Li T."/>
            <person name="Zhao J."/>
            <person name="Zhao C."/>
            <person name="Liu Z."/>
            <person name="Zhao F."/>
            <person name="Marquardt J."/>
            <person name="Nomura C.T."/>
            <person name="Persson S."/>
            <person name="Detter J.C."/>
            <person name="Richardson P.M."/>
            <person name="Lanz C."/>
            <person name="Schuster S.C."/>
            <person name="Wang J."/>
            <person name="Li S."/>
            <person name="Huang X."/>
            <person name="Cai T."/>
            <person name="Yu Z."/>
            <person name="Luo J."/>
            <person name="Zhao J."/>
            <person name="Bryant D.A."/>
        </authorList>
    </citation>
    <scope>NUCLEOTIDE SEQUENCE [LARGE SCALE GENOMIC DNA]</scope>
    <source>
        <strain>ATCC 27264 / PCC 7002 / PR-6</strain>
    </source>
</reference>
<protein>
    <recommendedName>
        <fullName evidence="1">ATP synthase subunit delta</fullName>
    </recommendedName>
    <alternativeName>
        <fullName evidence="1">ATP synthase F(1) sector subunit delta</fullName>
    </alternativeName>
    <alternativeName>
        <fullName evidence="1">F-type ATPase subunit delta</fullName>
        <shortName evidence="1">F-ATPase subunit delta</shortName>
    </alternativeName>
</protein>
<sequence length="185" mass="20248">MKGNTMIAQVVEPYAGALMTLAQETNKVEAFAENCRALLSLFQESAEFRSFVMNPLVKAEDKKGVLQGVCGQDVDTYFLNFLFLLVDRRRIVFLEGICQEFVALQRKLNNIVLADVTSAQPLTTDQEAAIADQVKQMTGANAVELNISTDADLIGGVVIKVGSKVFDASLRGQLRRISMDLLGSN</sequence>
<keyword id="KW-0066">ATP synthesis</keyword>
<keyword id="KW-0139">CF(1)</keyword>
<keyword id="KW-0375">Hydrogen ion transport</keyword>
<keyword id="KW-0406">Ion transport</keyword>
<keyword id="KW-0472">Membrane</keyword>
<keyword id="KW-1185">Reference proteome</keyword>
<keyword id="KW-0793">Thylakoid</keyword>
<keyword id="KW-0813">Transport</keyword>
<evidence type="ECO:0000255" key="1">
    <source>
        <dbReference type="HAMAP-Rule" id="MF_01416"/>
    </source>
</evidence>
<gene>
    <name evidence="1" type="primary">atpH</name>
    <name evidence="1" type="synonym">atpD</name>
    <name type="ordered locus">SYNPCC7002_A0735</name>
</gene>
<accession>B1XHY9</accession>
<proteinExistence type="inferred from homology"/>
<dbReference type="EMBL" id="CP000951">
    <property type="protein sequence ID" value="ACA98740.1"/>
    <property type="molecule type" value="Genomic_DNA"/>
</dbReference>
<dbReference type="RefSeq" id="WP_012306364.1">
    <property type="nucleotide sequence ID" value="NZ_JAHHPU010000001.1"/>
</dbReference>
<dbReference type="SMR" id="B1XHY9"/>
<dbReference type="STRING" id="32049.SYNPCC7002_A0735"/>
<dbReference type="KEGG" id="syp:SYNPCC7002_A0735"/>
<dbReference type="eggNOG" id="COG0712">
    <property type="taxonomic scope" value="Bacteria"/>
</dbReference>
<dbReference type="HOGENOM" id="CLU_085114_4_0_3"/>
<dbReference type="Proteomes" id="UP000001688">
    <property type="component" value="Chromosome"/>
</dbReference>
<dbReference type="GO" id="GO:0031676">
    <property type="term" value="C:plasma membrane-derived thylakoid membrane"/>
    <property type="evidence" value="ECO:0007669"/>
    <property type="project" value="UniProtKB-SubCell"/>
</dbReference>
<dbReference type="GO" id="GO:0045259">
    <property type="term" value="C:proton-transporting ATP synthase complex"/>
    <property type="evidence" value="ECO:0007669"/>
    <property type="project" value="UniProtKB-KW"/>
</dbReference>
<dbReference type="GO" id="GO:0046933">
    <property type="term" value="F:proton-transporting ATP synthase activity, rotational mechanism"/>
    <property type="evidence" value="ECO:0007669"/>
    <property type="project" value="UniProtKB-UniRule"/>
</dbReference>
<dbReference type="Gene3D" id="1.10.520.20">
    <property type="entry name" value="N-terminal domain of the delta subunit of the F1F0-ATP synthase"/>
    <property type="match status" value="1"/>
</dbReference>
<dbReference type="HAMAP" id="MF_01416">
    <property type="entry name" value="ATP_synth_delta_bact"/>
    <property type="match status" value="1"/>
</dbReference>
<dbReference type="InterPro" id="IPR026015">
    <property type="entry name" value="ATP_synth_OSCP/delta_N_sf"/>
</dbReference>
<dbReference type="InterPro" id="IPR020781">
    <property type="entry name" value="ATPase_OSCP/d_CS"/>
</dbReference>
<dbReference type="InterPro" id="IPR000711">
    <property type="entry name" value="ATPase_OSCP/dsu"/>
</dbReference>
<dbReference type="NCBIfam" id="TIGR01145">
    <property type="entry name" value="ATP_synt_delta"/>
    <property type="match status" value="1"/>
</dbReference>
<dbReference type="PANTHER" id="PTHR11910">
    <property type="entry name" value="ATP SYNTHASE DELTA CHAIN"/>
    <property type="match status" value="1"/>
</dbReference>
<dbReference type="Pfam" id="PF00213">
    <property type="entry name" value="OSCP"/>
    <property type="match status" value="1"/>
</dbReference>
<dbReference type="PRINTS" id="PR00125">
    <property type="entry name" value="ATPASEDELTA"/>
</dbReference>
<dbReference type="SUPFAM" id="SSF47928">
    <property type="entry name" value="N-terminal domain of the delta subunit of the F1F0-ATP synthase"/>
    <property type="match status" value="1"/>
</dbReference>
<dbReference type="PROSITE" id="PS00389">
    <property type="entry name" value="ATPASE_DELTA"/>
    <property type="match status" value="1"/>
</dbReference>
<organism>
    <name type="scientific">Picosynechococcus sp. (strain ATCC 27264 / PCC 7002 / PR-6)</name>
    <name type="common">Agmenellum quadruplicatum</name>
    <dbReference type="NCBI Taxonomy" id="32049"/>
    <lineage>
        <taxon>Bacteria</taxon>
        <taxon>Bacillati</taxon>
        <taxon>Cyanobacteriota</taxon>
        <taxon>Cyanophyceae</taxon>
        <taxon>Oscillatoriophycideae</taxon>
        <taxon>Chroococcales</taxon>
        <taxon>Geminocystaceae</taxon>
        <taxon>Picosynechococcus</taxon>
    </lineage>
</organism>